<name>Y1214_PSEPK</name>
<evidence type="ECO:0000255" key="1">
    <source>
        <dbReference type="HAMAP-Rule" id="MF_00693"/>
    </source>
</evidence>
<evidence type="ECO:0000256" key="2">
    <source>
        <dbReference type="SAM" id="MobiDB-lite"/>
    </source>
</evidence>
<accession>Q88NJ3</accession>
<comment type="subcellular location">
    <subcellularLocation>
        <location evidence="1">Cytoplasm</location>
    </subcellularLocation>
</comment>
<comment type="similarity">
    <text evidence="1">Belongs to the TACO1 family.</text>
</comment>
<keyword id="KW-0963">Cytoplasm</keyword>
<keyword id="KW-0238">DNA-binding</keyword>
<keyword id="KW-1185">Reference proteome</keyword>
<keyword id="KW-0804">Transcription</keyword>
<keyword id="KW-0805">Transcription regulation</keyword>
<gene>
    <name type="ordered locus">PP_1214</name>
</gene>
<feature type="chain" id="PRO_0000175869" description="Probable transcriptional regulatory protein PP_1214">
    <location>
        <begin position="1"/>
        <end position="248"/>
    </location>
</feature>
<feature type="region of interest" description="Disordered" evidence="2">
    <location>
        <begin position="1"/>
        <end position="21"/>
    </location>
</feature>
<reference key="1">
    <citation type="journal article" date="2002" name="Environ. Microbiol.">
        <title>Complete genome sequence and comparative analysis of the metabolically versatile Pseudomonas putida KT2440.</title>
        <authorList>
            <person name="Nelson K.E."/>
            <person name="Weinel C."/>
            <person name="Paulsen I.T."/>
            <person name="Dodson R.J."/>
            <person name="Hilbert H."/>
            <person name="Martins dos Santos V.A.P."/>
            <person name="Fouts D.E."/>
            <person name="Gill S.R."/>
            <person name="Pop M."/>
            <person name="Holmes M."/>
            <person name="Brinkac L.M."/>
            <person name="Beanan M.J."/>
            <person name="DeBoy R.T."/>
            <person name="Daugherty S.C."/>
            <person name="Kolonay J.F."/>
            <person name="Madupu R."/>
            <person name="Nelson W.C."/>
            <person name="White O."/>
            <person name="Peterson J.D."/>
            <person name="Khouri H.M."/>
            <person name="Hance I."/>
            <person name="Chris Lee P."/>
            <person name="Holtzapple E.K."/>
            <person name="Scanlan D."/>
            <person name="Tran K."/>
            <person name="Moazzez A."/>
            <person name="Utterback T.R."/>
            <person name="Rizzo M."/>
            <person name="Lee K."/>
            <person name="Kosack D."/>
            <person name="Moestl D."/>
            <person name="Wedler H."/>
            <person name="Lauber J."/>
            <person name="Stjepandic D."/>
            <person name="Hoheisel J."/>
            <person name="Straetz M."/>
            <person name="Heim S."/>
            <person name="Kiewitz C."/>
            <person name="Eisen J.A."/>
            <person name="Timmis K.N."/>
            <person name="Duesterhoeft A."/>
            <person name="Tuemmler B."/>
            <person name="Fraser C.M."/>
        </authorList>
    </citation>
    <scope>NUCLEOTIDE SEQUENCE [LARGE SCALE GENOMIC DNA]</scope>
    <source>
        <strain>ATCC 47054 / DSM 6125 / CFBP 8728 / NCIMB 11950 / KT2440</strain>
    </source>
</reference>
<dbReference type="EMBL" id="AE015451">
    <property type="protein sequence ID" value="AAN66838.1"/>
    <property type="molecule type" value="Genomic_DNA"/>
</dbReference>
<dbReference type="RefSeq" id="NP_743374.1">
    <property type="nucleotide sequence ID" value="NC_002947.4"/>
</dbReference>
<dbReference type="RefSeq" id="WP_003254770.1">
    <property type="nucleotide sequence ID" value="NZ_CP169744.1"/>
</dbReference>
<dbReference type="SMR" id="Q88NJ3"/>
<dbReference type="STRING" id="160488.PP_1214"/>
<dbReference type="PaxDb" id="160488-PP_1214"/>
<dbReference type="KEGG" id="ppu:PP_1214"/>
<dbReference type="PATRIC" id="fig|160488.4.peg.1290"/>
<dbReference type="eggNOG" id="COG0217">
    <property type="taxonomic scope" value="Bacteria"/>
</dbReference>
<dbReference type="HOGENOM" id="CLU_062974_2_2_6"/>
<dbReference type="OrthoDB" id="9781053at2"/>
<dbReference type="PhylomeDB" id="Q88NJ3"/>
<dbReference type="BioCyc" id="PPUT160488:G1G01-1299-MONOMER"/>
<dbReference type="Proteomes" id="UP000000556">
    <property type="component" value="Chromosome"/>
</dbReference>
<dbReference type="GO" id="GO:0005829">
    <property type="term" value="C:cytosol"/>
    <property type="evidence" value="ECO:0007669"/>
    <property type="project" value="TreeGrafter"/>
</dbReference>
<dbReference type="GO" id="GO:0003677">
    <property type="term" value="F:DNA binding"/>
    <property type="evidence" value="ECO:0007669"/>
    <property type="project" value="UniProtKB-UniRule"/>
</dbReference>
<dbReference type="GO" id="GO:0006355">
    <property type="term" value="P:regulation of DNA-templated transcription"/>
    <property type="evidence" value="ECO:0007669"/>
    <property type="project" value="UniProtKB-UniRule"/>
</dbReference>
<dbReference type="FunFam" id="1.10.10.200:FF:000001">
    <property type="entry name" value="Probable transcriptional regulatory protein YebC"/>
    <property type="match status" value="1"/>
</dbReference>
<dbReference type="FunFam" id="3.30.70.980:FF:000002">
    <property type="entry name" value="Probable transcriptional regulatory protein YebC"/>
    <property type="match status" value="1"/>
</dbReference>
<dbReference type="Gene3D" id="1.10.10.200">
    <property type="match status" value="1"/>
</dbReference>
<dbReference type="Gene3D" id="3.30.70.980">
    <property type="match status" value="2"/>
</dbReference>
<dbReference type="HAMAP" id="MF_00693">
    <property type="entry name" value="Transcrip_reg_TACO1"/>
    <property type="match status" value="1"/>
</dbReference>
<dbReference type="InterPro" id="IPR017856">
    <property type="entry name" value="Integrase-like_N"/>
</dbReference>
<dbReference type="InterPro" id="IPR048300">
    <property type="entry name" value="TACO1_YebC-like_2nd/3rd_dom"/>
</dbReference>
<dbReference type="InterPro" id="IPR049083">
    <property type="entry name" value="TACO1_YebC_N"/>
</dbReference>
<dbReference type="InterPro" id="IPR002876">
    <property type="entry name" value="Transcrip_reg_TACO1-like"/>
</dbReference>
<dbReference type="InterPro" id="IPR026564">
    <property type="entry name" value="Transcrip_reg_TACO1-like_dom3"/>
</dbReference>
<dbReference type="InterPro" id="IPR029072">
    <property type="entry name" value="YebC-like"/>
</dbReference>
<dbReference type="NCBIfam" id="NF001030">
    <property type="entry name" value="PRK00110.1"/>
    <property type="match status" value="1"/>
</dbReference>
<dbReference type="NCBIfam" id="NF009044">
    <property type="entry name" value="PRK12378.1"/>
    <property type="match status" value="1"/>
</dbReference>
<dbReference type="NCBIfam" id="TIGR01033">
    <property type="entry name" value="YebC/PmpR family DNA-binding transcriptional regulator"/>
    <property type="match status" value="1"/>
</dbReference>
<dbReference type="PANTHER" id="PTHR12532:SF6">
    <property type="entry name" value="TRANSCRIPTIONAL REGULATORY PROTEIN YEBC-RELATED"/>
    <property type="match status" value="1"/>
</dbReference>
<dbReference type="PANTHER" id="PTHR12532">
    <property type="entry name" value="TRANSLATIONAL ACTIVATOR OF CYTOCHROME C OXIDASE 1"/>
    <property type="match status" value="1"/>
</dbReference>
<dbReference type="Pfam" id="PF20772">
    <property type="entry name" value="TACO1_YebC_N"/>
    <property type="match status" value="1"/>
</dbReference>
<dbReference type="Pfam" id="PF01709">
    <property type="entry name" value="Transcrip_reg"/>
    <property type="match status" value="1"/>
</dbReference>
<dbReference type="SUPFAM" id="SSF75625">
    <property type="entry name" value="YebC-like"/>
    <property type="match status" value="1"/>
</dbReference>
<protein>
    <recommendedName>
        <fullName evidence="1">Probable transcriptional regulatory protein PP_1214</fullName>
    </recommendedName>
</protein>
<proteinExistence type="inferred from homology"/>
<sequence>MAGHSKWANIKHRKERQDAKRGKVFTKWIRELTVAAKQGGPDPASNPRLRLALDKALGANMSRDIIDRAVARGAGTNESDNVEELSYEGYGPGGVAIMVEAMTDNRNRTAAAVRHAFTKCGGNLGTDGSVAYLFERKGQISFAPGVEEDALMEAAMEADADDVVANDDGSFDVFTSFNSFYAVRNALEEAGFKAADAEIVMQPTTSAELDQDGAEKVLKLIDMLEDLDDVQNVYSNAQISDEIMENLG</sequence>
<organism>
    <name type="scientific">Pseudomonas putida (strain ATCC 47054 / DSM 6125 / CFBP 8728 / NCIMB 11950 / KT2440)</name>
    <dbReference type="NCBI Taxonomy" id="160488"/>
    <lineage>
        <taxon>Bacteria</taxon>
        <taxon>Pseudomonadati</taxon>
        <taxon>Pseudomonadota</taxon>
        <taxon>Gammaproteobacteria</taxon>
        <taxon>Pseudomonadales</taxon>
        <taxon>Pseudomonadaceae</taxon>
        <taxon>Pseudomonas</taxon>
    </lineage>
</organism>